<proteinExistence type="inferred from homology"/>
<organism>
    <name type="scientific">Shewanella denitrificans (strain OS217 / ATCC BAA-1090 / DSM 15013)</name>
    <dbReference type="NCBI Taxonomy" id="318161"/>
    <lineage>
        <taxon>Bacteria</taxon>
        <taxon>Pseudomonadati</taxon>
        <taxon>Pseudomonadota</taxon>
        <taxon>Gammaproteobacteria</taxon>
        <taxon>Alteromonadales</taxon>
        <taxon>Shewanellaceae</taxon>
        <taxon>Shewanella</taxon>
    </lineage>
</organism>
<gene>
    <name evidence="1" type="primary">rplB</name>
    <name type="ordered locus">Sden_0173</name>
</gene>
<keyword id="KW-1185">Reference proteome</keyword>
<keyword id="KW-0687">Ribonucleoprotein</keyword>
<keyword id="KW-0689">Ribosomal protein</keyword>
<keyword id="KW-0694">RNA-binding</keyword>
<keyword id="KW-0699">rRNA-binding</keyword>
<sequence>MAVIKCKPTSPGRRHVVKVVNTDLHKGKPFAALLAKKSKSGGRNNTGRITVRHVGGGHKQHYRLIDFKRNKDGIPAKVERIEYDPNRTAHIALVLYADGERRYILAAKGMKSGDPIQSGVGSEIKTGNSMPLRNIPVGSVVHAVEMKPGKGAQIARSAGAYVQVIARDGAYATLRLRSGEMRKVPVDCRATFGEVGNAEHMLRQLGKAGAKRWRGVRPTVRGVAMNPVDHPHGGGEGRTSGGRHPVSPWGVPTKGYKTRSNKRTDKYIVRRRNK</sequence>
<accession>Q12SV6</accession>
<protein>
    <recommendedName>
        <fullName evidence="1">Large ribosomal subunit protein uL2</fullName>
    </recommendedName>
    <alternativeName>
        <fullName evidence="3">50S ribosomal protein L2</fullName>
    </alternativeName>
</protein>
<comment type="function">
    <text evidence="1">One of the primary rRNA binding proteins. Required for association of the 30S and 50S subunits to form the 70S ribosome, for tRNA binding and peptide bond formation. It has been suggested to have peptidyltransferase activity; this is somewhat controversial. Makes several contacts with the 16S rRNA in the 70S ribosome.</text>
</comment>
<comment type="subunit">
    <text evidence="1">Part of the 50S ribosomal subunit. Forms a bridge to the 30S subunit in the 70S ribosome.</text>
</comment>
<comment type="similarity">
    <text evidence="1">Belongs to the universal ribosomal protein uL2 family.</text>
</comment>
<feature type="chain" id="PRO_0000310009" description="Large ribosomal subunit protein uL2">
    <location>
        <begin position="1"/>
        <end position="274"/>
    </location>
</feature>
<feature type="region of interest" description="Disordered" evidence="2">
    <location>
        <begin position="223"/>
        <end position="264"/>
    </location>
</feature>
<dbReference type="EMBL" id="CP000302">
    <property type="protein sequence ID" value="ABE53470.1"/>
    <property type="molecule type" value="Genomic_DNA"/>
</dbReference>
<dbReference type="RefSeq" id="WP_011494638.1">
    <property type="nucleotide sequence ID" value="NC_007954.1"/>
</dbReference>
<dbReference type="SMR" id="Q12SV6"/>
<dbReference type="STRING" id="318161.Sden_0173"/>
<dbReference type="KEGG" id="sdn:Sden_0173"/>
<dbReference type="eggNOG" id="COG0090">
    <property type="taxonomic scope" value="Bacteria"/>
</dbReference>
<dbReference type="HOGENOM" id="CLU_036235_2_1_6"/>
<dbReference type="OrthoDB" id="9778722at2"/>
<dbReference type="Proteomes" id="UP000001982">
    <property type="component" value="Chromosome"/>
</dbReference>
<dbReference type="GO" id="GO:0015934">
    <property type="term" value="C:large ribosomal subunit"/>
    <property type="evidence" value="ECO:0007669"/>
    <property type="project" value="InterPro"/>
</dbReference>
<dbReference type="GO" id="GO:0019843">
    <property type="term" value="F:rRNA binding"/>
    <property type="evidence" value="ECO:0007669"/>
    <property type="project" value="UniProtKB-UniRule"/>
</dbReference>
<dbReference type="GO" id="GO:0003735">
    <property type="term" value="F:structural constituent of ribosome"/>
    <property type="evidence" value="ECO:0007669"/>
    <property type="project" value="InterPro"/>
</dbReference>
<dbReference type="GO" id="GO:0016740">
    <property type="term" value="F:transferase activity"/>
    <property type="evidence" value="ECO:0007669"/>
    <property type="project" value="InterPro"/>
</dbReference>
<dbReference type="GO" id="GO:0002181">
    <property type="term" value="P:cytoplasmic translation"/>
    <property type="evidence" value="ECO:0007669"/>
    <property type="project" value="TreeGrafter"/>
</dbReference>
<dbReference type="FunFam" id="2.30.30.30:FF:000001">
    <property type="entry name" value="50S ribosomal protein L2"/>
    <property type="match status" value="1"/>
</dbReference>
<dbReference type="FunFam" id="2.40.50.140:FF:000003">
    <property type="entry name" value="50S ribosomal protein L2"/>
    <property type="match status" value="1"/>
</dbReference>
<dbReference type="FunFam" id="4.10.950.10:FF:000001">
    <property type="entry name" value="50S ribosomal protein L2"/>
    <property type="match status" value="1"/>
</dbReference>
<dbReference type="Gene3D" id="2.30.30.30">
    <property type="match status" value="1"/>
</dbReference>
<dbReference type="Gene3D" id="2.40.50.140">
    <property type="entry name" value="Nucleic acid-binding proteins"/>
    <property type="match status" value="1"/>
</dbReference>
<dbReference type="Gene3D" id="4.10.950.10">
    <property type="entry name" value="Ribosomal protein L2, domain 3"/>
    <property type="match status" value="1"/>
</dbReference>
<dbReference type="HAMAP" id="MF_01320_B">
    <property type="entry name" value="Ribosomal_uL2_B"/>
    <property type="match status" value="1"/>
</dbReference>
<dbReference type="InterPro" id="IPR012340">
    <property type="entry name" value="NA-bd_OB-fold"/>
</dbReference>
<dbReference type="InterPro" id="IPR014722">
    <property type="entry name" value="Rib_uL2_dom2"/>
</dbReference>
<dbReference type="InterPro" id="IPR002171">
    <property type="entry name" value="Ribosomal_uL2"/>
</dbReference>
<dbReference type="InterPro" id="IPR005880">
    <property type="entry name" value="Ribosomal_uL2_bac/org-type"/>
</dbReference>
<dbReference type="InterPro" id="IPR022669">
    <property type="entry name" value="Ribosomal_uL2_C"/>
</dbReference>
<dbReference type="InterPro" id="IPR022671">
    <property type="entry name" value="Ribosomal_uL2_CS"/>
</dbReference>
<dbReference type="InterPro" id="IPR014726">
    <property type="entry name" value="Ribosomal_uL2_dom3"/>
</dbReference>
<dbReference type="InterPro" id="IPR022666">
    <property type="entry name" value="Ribosomal_uL2_RNA-bd_dom"/>
</dbReference>
<dbReference type="InterPro" id="IPR008991">
    <property type="entry name" value="Translation_prot_SH3-like_sf"/>
</dbReference>
<dbReference type="NCBIfam" id="TIGR01171">
    <property type="entry name" value="rplB_bact"/>
    <property type="match status" value="1"/>
</dbReference>
<dbReference type="PANTHER" id="PTHR13691:SF5">
    <property type="entry name" value="LARGE RIBOSOMAL SUBUNIT PROTEIN UL2M"/>
    <property type="match status" value="1"/>
</dbReference>
<dbReference type="PANTHER" id="PTHR13691">
    <property type="entry name" value="RIBOSOMAL PROTEIN L2"/>
    <property type="match status" value="1"/>
</dbReference>
<dbReference type="Pfam" id="PF00181">
    <property type="entry name" value="Ribosomal_L2"/>
    <property type="match status" value="1"/>
</dbReference>
<dbReference type="Pfam" id="PF03947">
    <property type="entry name" value="Ribosomal_L2_C"/>
    <property type="match status" value="1"/>
</dbReference>
<dbReference type="PIRSF" id="PIRSF002158">
    <property type="entry name" value="Ribosomal_L2"/>
    <property type="match status" value="1"/>
</dbReference>
<dbReference type="SMART" id="SM01383">
    <property type="entry name" value="Ribosomal_L2"/>
    <property type="match status" value="1"/>
</dbReference>
<dbReference type="SMART" id="SM01382">
    <property type="entry name" value="Ribosomal_L2_C"/>
    <property type="match status" value="1"/>
</dbReference>
<dbReference type="SUPFAM" id="SSF50249">
    <property type="entry name" value="Nucleic acid-binding proteins"/>
    <property type="match status" value="1"/>
</dbReference>
<dbReference type="SUPFAM" id="SSF50104">
    <property type="entry name" value="Translation proteins SH3-like domain"/>
    <property type="match status" value="1"/>
</dbReference>
<dbReference type="PROSITE" id="PS00467">
    <property type="entry name" value="RIBOSOMAL_L2"/>
    <property type="match status" value="1"/>
</dbReference>
<name>RL2_SHEDO</name>
<reference key="1">
    <citation type="submission" date="2006-03" db="EMBL/GenBank/DDBJ databases">
        <title>Complete sequence of Shewanella denitrificans OS217.</title>
        <authorList>
            <consortium name="US DOE Joint Genome Institute"/>
            <person name="Copeland A."/>
            <person name="Lucas S."/>
            <person name="Lapidus A."/>
            <person name="Barry K."/>
            <person name="Detter J.C."/>
            <person name="Glavina del Rio T."/>
            <person name="Hammon N."/>
            <person name="Israni S."/>
            <person name="Dalin E."/>
            <person name="Tice H."/>
            <person name="Pitluck S."/>
            <person name="Brettin T."/>
            <person name="Bruce D."/>
            <person name="Han C."/>
            <person name="Tapia R."/>
            <person name="Gilna P."/>
            <person name="Kiss H."/>
            <person name="Schmutz J."/>
            <person name="Larimer F."/>
            <person name="Land M."/>
            <person name="Hauser L."/>
            <person name="Kyrpides N."/>
            <person name="Lykidis A."/>
            <person name="Richardson P."/>
        </authorList>
    </citation>
    <scope>NUCLEOTIDE SEQUENCE [LARGE SCALE GENOMIC DNA]</scope>
    <source>
        <strain>OS217 / ATCC BAA-1090 / DSM 15013</strain>
    </source>
</reference>
<evidence type="ECO:0000255" key="1">
    <source>
        <dbReference type="HAMAP-Rule" id="MF_01320"/>
    </source>
</evidence>
<evidence type="ECO:0000256" key="2">
    <source>
        <dbReference type="SAM" id="MobiDB-lite"/>
    </source>
</evidence>
<evidence type="ECO:0000305" key="3"/>